<reference key="1">
    <citation type="journal article" date="2004" name="J. Bacteriol.">
        <title>Two arginine repressors regulate arginine biosynthesis in Lactobacillus plantarum.</title>
        <authorList>
            <person name="Nicoloff H."/>
            <person name="Arsene-Ploetze F."/>
            <person name="Malandain C."/>
            <person name="Kleerebezem M."/>
            <person name="Bringel F."/>
        </authorList>
    </citation>
    <scope>NUCLEOTIDE SEQUENCE [GENOMIC DNA]</scope>
    <source>
        <strain>ATCC 8014 / CCM 1904 / DSM 20205 / NCDO 82 / NCIB 6376</strain>
    </source>
</reference>
<reference key="2">
    <citation type="journal article" date="2003" name="Proc. Natl. Acad. Sci. U.S.A.">
        <title>Complete genome sequence of Lactobacillus plantarum WCFS1.</title>
        <authorList>
            <person name="Kleerebezem M."/>
            <person name="Boekhorst J."/>
            <person name="van Kranenburg R."/>
            <person name="Molenaar D."/>
            <person name="Kuipers O.P."/>
            <person name="Leer R."/>
            <person name="Tarchini R."/>
            <person name="Peters S.A."/>
            <person name="Sandbrink H.M."/>
            <person name="Fiers M.W.E.J."/>
            <person name="Stiekema W."/>
            <person name="Klein Lankhorst R.M."/>
            <person name="Bron P.A."/>
            <person name="Hoffer S.M."/>
            <person name="Nierop Groot M.N."/>
            <person name="Kerkhoven R."/>
            <person name="De Vries M."/>
            <person name="Ursing B."/>
            <person name="De Vos W.M."/>
            <person name="Siezen R.J."/>
        </authorList>
    </citation>
    <scope>NUCLEOTIDE SEQUENCE [LARGE SCALE GENOMIC DNA]</scope>
    <source>
        <strain>ATCC BAA-793 / NCIMB 8826 / WCFS1</strain>
    </source>
</reference>
<reference key="3">
    <citation type="journal article" date="2012" name="J. Bacteriol.">
        <title>Complete resequencing and reannotation of the Lactobacillus plantarum WCFS1 genome.</title>
        <authorList>
            <person name="Siezen R.J."/>
            <person name="Francke C."/>
            <person name="Renckens B."/>
            <person name="Boekhorst J."/>
            <person name="Wels M."/>
            <person name="Kleerebezem M."/>
            <person name="van Hijum S.A."/>
        </authorList>
    </citation>
    <scope>NUCLEOTIDE SEQUENCE [LARGE SCALE GENOMIC DNA]</scope>
    <scope>GENOME REANNOTATION</scope>
    <source>
        <strain>ATCC BAA-793 / NCIMB 8826 / WCFS1</strain>
    </source>
</reference>
<organism>
    <name type="scientific">Lactiplantibacillus plantarum (strain ATCC BAA-793 / NCIMB 8826 / WCFS1)</name>
    <name type="common">Lactobacillus plantarum</name>
    <dbReference type="NCBI Taxonomy" id="220668"/>
    <lineage>
        <taxon>Bacteria</taxon>
        <taxon>Bacillati</taxon>
        <taxon>Bacillota</taxon>
        <taxon>Bacilli</taxon>
        <taxon>Lactobacillales</taxon>
        <taxon>Lactobacillaceae</taxon>
        <taxon>Lactiplantibacillus</taxon>
    </lineage>
</organism>
<accession>Q8VL04</accession>
<accession>F9UNX9</accession>
<accession>Q7AKU2</accession>
<gene>
    <name evidence="1" type="primary">argR2</name>
    <name type="ordered locus">lp_1604</name>
</gene>
<name>ARGR2_LACPL</name>
<sequence length="152" mass="17452">MKKQERQRYIKRLLSSNEIERQEDFVKLLRAEDIDVTQATISRDIKDMQLVKVPSATGGYHYSMPVQKQMDTEKKLKRTLKDAYVSYATQDKFVLIKVLPGNGPALATLIEAMHYDEIFGTLGDDAHVLIICKSLAMTLELQQKIQRLLSDH</sequence>
<proteinExistence type="inferred from homology"/>
<protein>
    <recommendedName>
        <fullName evidence="1">Arginine repressor</fullName>
    </recommendedName>
</protein>
<evidence type="ECO:0000255" key="1">
    <source>
        <dbReference type="HAMAP-Rule" id="MF_00173"/>
    </source>
</evidence>
<dbReference type="EMBL" id="AF451891">
    <property type="protein sequence ID" value="AAL48253.1"/>
    <property type="molecule type" value="Genomic_DNA"/>
</dbReference>
<dbReference type="EMBL" id="AL935263">
    <property type="protein sequence ID" value="CCC78918.1"/>
    <property type="molecule type" value="Genomic_DNA"/>
</dbReference>
<dbReference type="RefSeq" id="WP_003640354.1">
    <property type="nucleotide sequence ID" value="NC_004567.2"/>
</dbReference>
<dbReference type="RefSeq" id="YP_004889432.1">
    <property type="nucleotide sequence ID" value="NC_004567.2"/>
</dbReference>
<dbReference type="SMR" id="Q8VL04"/>
<dbReference type="STRING" id="220668.lp_1604"/>
<dbReference type="EnsemblBacteria" id="CCC78918">
    <property type="protein sequence ID" value="CCC78918"/>
    <property type="gene ID" value="lp_1604"/>
</dbReference>
<dbReference type="KEGG" id="lpl:lp_1604"/>
<dbReference type="PATRIC" id="fig|220668.9.peg.1353"/>
<dbReference type="eggNOG" id="COG1438">
    <property type="taxonomic scope" value="Bacteria"/>
</dbReference>
<dbReference type="HOGENOM" id="CLU_097103_3_0_9"/>
<dbReference type="OrthoDB" id="9807089at2"/>
<dbReference type="PhylomeDB" id="Q8VL04"/>
<dbReference type="UniPathway" id="UPA00068"/>
<dbReference type="Proteomes" id="UP000000432">
    <property type="component" value="Chromosome"/>
</dbReference>
<dbReference type="GO" id="GO:0005737">
    <property type="term" value="C:cytoplasm"/>
    <property type="evidence" value="ECO:0007669"/>
    <property type="project" value="UniProtKB-SubCell"/>
</dbReference>
<dbReference type="GO" id="GO:0034618">
    <property type="term" value="F:arginine binding"/>
    <property type="evidence" value="ECO:0007669"/>
    <property type="project" value="InterPro"/>
</dbReference>
<dbReference type="GO" id="GO:0003677">
    <property type="term" value="F:DNA binding"/>
    <property type="evidence" value="ECO:0007669"/>
    <property type="project" value="UniProtKB-KW"/>
</dbReference>
<dbReference type="GO" id="GO:0003700">
    <property type="term" value="F:DNA-binding transcription factor activity"/>
    <property type="evidence" value="ECO:0007669"/>
    <property type="project" value="UniProtKB-UniRule"/>
</dbReference>
<dbReference type="GO" id="GO:0006526">
    <property type="term" value="P:L-arginine biosynthetic process"/>
    <property type="evidence" value="ECO:0007669"/>
    <property type="project" value="UniProtKB-UniPathway"/>
</dbReference>
<dbReference type="GO" id="GO:0051259">
    <property type="term" value="P:protein complex oligomerization"/>
    <property type="evidence" value="ECO:0007669"/>
    <property type="project" value="InterPro"/>
</dbReference>
<dbReference type="GO" id="GO:1900079">
    <property type="term" value="P:regulation of arginine biosynthetic process"/>
    <property type="evidence" value="ECO:0007669"/>
    <property type="project" value="UniProtKB-UniRule"/>
</dbReference>
<dbReference type="Gene3D" id="3.30.1360.40">
    <property type="match status" value="1"/>
</dbReference>
<dbReference type="Gene3D" id="1.10.10.10">
    <property type="entry name" value="Winged helix-like DNA-binding domain superfamily/Winged helix DNA-binding domain"/>
    <property type="match status" value="1"/>
</dbReference>
<dbReference type="HAMAP" id="MF_00173">
    <property type="entry name" value="Arg_repressor"/>
    <property type="match status" value="1"/>
</dbReference>
<dbReference type="InterPro" id="IPR001669">
    <property type="entry name" value="Arg_repress"/>
</dbReference>
<dbReference type="InterPro" id="IPR020899">
    <property type="entry name" value="Arg_repress_C"/>
</dbReference>
<dbReference type="InterPro" id="IPR036251">
    <property type="entry name" value="Arg_repress_C_sf"/>
</dbReference>
<dbReference type="InterPro" id="IPR020900">
    <property type="entry name" value="Arg_repress_DNA-bd"/>
</dbReference>
<dbReference type="InterPro" id="IPR036388">
    <property type="entry name" value="WH-like_DNA-bd_sf"/>
</dbReference>
<dbReference type="InterPro" id="IPR036390">
    <property type="entry name" value="WH_DNA-bd_sf"/>
</dbReference>
<dbReference type="PANTHER" id="PTHR34471">
    <property type="entry name" value="ARGININE REPRESSOR"/>
    <property type="match status" value="1"/>
</dbReference>
<dbReference type="PANTHER" id="PTHR34471:SF1">
    <property type="entry name" value="ARGININE REPRESSOR"/>
    <property type="match status" value="1"/>
</dbReference>
<dbReference type="Pfam" id="PF01316">
    <property type="entry name" value="Arg_repressor"/>
    <property type="match status" value="1"/>
</dbReference>
<dbReference type="Pfam" id="PF02863">
    <property type="entry name" value="Arg_repressor_C"/>
    <property type="match status" value="1"/>
</dbReference>
<dbReference type="PRINTS" id="PR01467">
    <property type="entry name" value="ARGREPRESSOR"/>
</dbReference>
<dbReference type="SUPFAM" id="SSF55252">
    <property type="entry name" value="C-terminal domain of arginine repressor"/>
    <property type="match status" value="1"/>
</dbReference>
<dbReference type="SUPFAM" id="SSF46785">
    <property type="entry name" value="Winged helix' DNA-binding domain"/>
    <property type="match status" value="1"/>
</dbReference>
<comment type="function">
    <text>Regulates arginine biosynthesis genes.</text>
</comment>
<comment type="pathway">
    <text>Amino-acid biosynthesis; L-arginine biosynthesis [regulation].</text>
</comment>
<comment type="subcellular location">
    <subcellularLocation>
        <location evidence="1">Cytoplasm</location>
    </subcellularLocation>
</comment>
<comment type="similarity">
    <text evidence="1">Belongs to the ArgR family.</text>
</comment>
<feature type="chain" id="PRO_0000205096" description="Arginine repressor">
    <location>
        <begin position="1"/>
        <end position="152"/>
    </location>
</feature>
<keyword id="KW-0028">Amino-acid biosynthesis</keyword>
<keyword id="KW-0055">Arginine biosynthesis</keyword>
<keyword id="KW-0963">Cytoplasm</keyword>
<keyword id="KW-0238">DNA-binding</keyword>
<keyword id="KW-1185">Reference proteome</keyword>
<keyword id="KW-0678">Repressor</keyword>
<keyword id="KW-0804">Transcription</keyword>
<keyword id="KW-0805">Transcription regulation</keyword>